<accession>A1SMX2</accession>
<gene>
    <name evidence="1" type="primary">tsaD</name>
    <name type="synonym">gcp</name>
    <name type="ordered locus">Noca_3657</name>
</gene>
<reference key="1">
    <citation type="submission" date="2006-12" db="EMBL/GenBank/DDBJ databases">
        <title>Complete sequence of chromosome 1 of Nocardioides sp. JS614.</title>
        <authorList>
            <person name="Copeland A."/>
            <person name="Lucas S."/>
            <person name="Lapidus A."/>
            <person name="Barry K."/>
            <person name="Detter J.C."/>
            <person name="Glavina del Rio T."/>
            <person name="Hammon N."/>
            <person name="Israni S."/>
            <person name="Dalin E."/>
            <person name="Tice H."/>
            <person name="Pitluck S."/>
            <person name="Thompson L.S."/>
            <person name="Brettin T."/>
            <person name="Bruce D."/>
            <person name="Han C."/>
            <person name="Tapia R."/>
            <person name="Schmutz J."/>
            <person name="Larimer F."/>
            <person name="Land M."/>
            <person name="Hauser L."/>
            <person name="Kyrpides N."/>
            <person name="Kim E."/>
            <person name="Mattes T."/>
            <person name="Gossett J."/>
            <person name="Richardson P."/>
        </authorList>
    </citation>
    <scope>NUCLEOTIDE SEQUENCE [LARGE SCALE GENOMIC DNA]</scope>
    <source>
        <strain>ATCC BAA-499 / JS614</strain>
    </source>
</reference>
<comment type="function">
    <text evidence="1">Required for the formation of a threonylcarbamoyl group on adenosine at position 37 (t(6)A37) in tRNAs that read codons beginning with adenine. Is involved in the transfer of the threonylcarbamoyl moiety of threonylcarbamoyl-AMP (TC-AMP) to the N6 group of A37, together with TsaE and TsaB. TsaD likely plays a direct catalytic role in this reaction.</text>
</comment>
<comment type="catalytic activity">
    <reaction evidence="1">
        <text>L-threonylcarbamoyladenylate + adenosine(37) in tRNA = N(6)-L-threonylcarbamoyladenosine(37) in tRNA + AMP + H(+)</text>
        <dbReference type="Rhea" id="RHEA:37059"/>
        <dbReference type="Rhea" id="RHEA-COMP:10162"/>
        <dbReference type="Rhea" id="RHEA-COMP:10163"/>
        <dbReference type="ChEBI" id="CHEBI:15378"/>
        <dbReference type="ChEBI" id="CHEBI:73682"/>
        <dbReference type="ChEBI" id="CHEBI:74411"/>
        <dbReference type="ChEBI" id="CHEBI:74418"/>
        <dbReference type="ChEBI" id="CHEBI:456215"/>
        <dbReference type="EC" id="2.3.1.234"/>
    </reaction>
</comment>
<comment type="cofactor">
    <cofactor evidence="1">
        <name>Fe(2+)</name>
        <dbReference type="ChEBI" id="CHEBI:29033"/>
    </cofactor>
    <text evidence="1">Binds 1 Fe(2+) ion per subunit.</text>
</comment>
<comment type="subcellular location">
    <subcellularLocation>
        <location evidence="1">Cytoplasm</location>
    </subcellularLocation>
</comment>
<comment type="similarity">
    <text evidence="1">Belongs to the KAE1 / TsaD family.</text>
</comment>
<evidence type="ECO:0000255" key="1">
    <source>
        <dbReference type="HAMAP-Rule" id="MF_01445"/>
    </source>
</evidence>
<sequence length="348" mass="35985">MSSEPLVLGIETSCDETGVGIVRGHTLLADAVASSVDEHARFGGVVPEVASRAHLEAMVPTIERACETAGIRLYDVDAIAVTSGPGLAGALMVGVAAAKALAVGLGKPIYGVNHLAAHVAVDQLEHGPLPEPCLALLVSGGHSSLLRVEDVTSGVDPMGATIDDAAGEAFDKVARLLGLPFPGGPYIDRAAREGSTVYVDFPRGLTSRRDLERHRFDFSFSGLKTAVARWVEARERSGEPVPVADVAASFQEAVCDVLTRKAIDAASSAGIEDLLIGGGVAANSRLRVLAEERAAARGIRVRVPRPGLCTDNGAMVAALGAEMVARGRTPSPLDLPADSSLPVTEVLV</sequence>
<protein>
    <recommendedName>
        <fullName evidence="1">tRNA N6-adenosine threonylcarbamoyltransferase</fullName>
        <ecNumber evidence="1">2.3.1.234</ecNumber>
    </recommendedName>
    <alternativeName>
        <fullName evidence="1">N6-L-threonylcarbamoyladenine synthase</fullName>
        <shortName evidence="1">t(6)A synthase</shortName>
    </alternativeName>
    <alternativeName>
        <fullName evidence="1">t(6)A37 threonylcarbamoyladenosine biosynthesis protein TsaD</fullName>
    </alternativeName>
    <alternativeName>
        <fullName evidence="1">tRNA threonylcarbamoyladenosine biosynthesis protein TsaD</fullName>
    </alternativeName>
</protein>
<feature type="chain" id="PRO_0000303460" description="tRNA N6-adenosine threonylcarbamoyltransferase">
    <location>
        <begin position="1"/>
        <end position="348"/>
    </location>
</feature>
<feature type="binding site" evidence="1">
    <location>
        <position position="114"/>
    </location>
    <ligand>
        <name>Fe cation</name>
        <dbReference type="ChEBI" id="CHEBI:24875"/>
    </ligand>
</feature>
<feature type="binding site" evidence="1">
    <location>
        <position position="118"/>
    </location>
    <ligand>
        <name>Fe cation</name>
        <dbReference type="ChEBI" id="CHEBI:24875"/>
    </ligand>
</feature>
<feature type="binding site" evidence="1">
    <location>
        <begin position="137"/>
        <end position="141"/>
    </location>
    <ligand>
        <name>substrate</name>
    </ligand>
</feature>
<feature type="binding site" evidence="1">
    <location>
        <position position="171"/>
    </location>
    <ligand>
        <name>substrate</name>
    </ligand>
</feature>
<feature type="binding site" evidence="1">
    <location>
        <position position="184"/>
    </location>
    <ligand>
        <name>substrate</name>
    </ligand>
</feature>
<feature type="binding site" evidence="1">
    <location>
        <position position="188"/>
    </location>
    <ligand>
        <name>substrate</name>
    </ligand>
</feature>
<feature type="binding site" evidence="1">
    <location>
        <position position="283"/>
    </location>
    <ligand>
        <name>substrate</name>
    </ligand>
</feature>
<feature type="binding site" evidence="1">
    <location>
        <position position="311"/>
    </location>
    <ligand>
        <name>Fe cation</name>
        <dbReference type="ChEBI" id="CHEBI:24875"/>
    </ligand>
</feature>
<name>TSAD_NOCSJ</name>
<dbReference type="EC" id="2.3.1.234" evidence="1"/>
<dbReference type="EMBL" id="CP000509">
    <property type="protein sequence ID" value="ABL83157.1"/>
    <property type="molecule type" value="Genomic_DNA"/>
</dbReference>
<dbReference type="RefSeq" id="WP_011757088.1">
    <property type="nucleotide sequence ID" value="NC_008699.1"/>
</dbReference>
<dbReference type="SMR" id="A1SMX2"/>
<dbReference type="STRING" id="196162.Noca_3657"/>
<dbReference type="KEGG" id="nca:Noca_3657"/>
<dbReference type="eggNOG" id="COG0533">
    <property type="taxonomic scope" value="Bacteria"/>
</dbReference>
<dbReference type="HOGENOM" id="CLU_023208_0_2_11"/>
<dbReference type="OrthoDB" id="9806197at2"/>
<dbReference type="Proteomes" id="UP000000640">
    <property type="component" value="Chromosome"/>
</dbReference>
<dbReference type="GO" id="GO:0005737">
    <property type="term" value="C:cytoplasm"/>
    <property type="evidence" value="ECO:0007669"/>
    <property type="project" value="UniProtKB-SubCell"/>
</dbReference>
<dbReference type="GO" id="GO:0005506">
    <property type="term" value="F:iron ion binding"/>
    <property type="evidence" value="ECO:0007669"/>
    <property type="project" value="UniProtKB-UniRule"/>
</dbReference>
<dbReference type="GO" id="GO:0061711">
    <property type="term" value="F:N(6)-L-threonylcarbamoyladenine synthase activity"/>
    <property type="evidence" value="ECO:0007669"/>
    <property type="project" value="UniProtKB-EC"/>
</dbReference>
<dbReference type="GO" id="GO:0002949">
    <property type="term" value="P:tRNA threonylcarbamoyladenosine modification"/>
    <property type="evidence" value="ECO:0007669"/>
    <property type="project" value="UniProtKB-UniRule"/>
</dbReference>
<dbReference type="CDD" id="cd24133">
    <property type="entry name" value="ASKHA_NBD_TsaD_bac"/>
    <property type="match status" value="1"/>
</dbReference>
<dbReference type="FunFam" id="3.30.420.40:FF:000012">
    <property type="entry name" value="tRNA N6-adenosine threonylcarbamoyltransferase"/>
    <property type="match status" value="1"/>
</dbReference>
<dbReference type="FunFam" id="3.30.420.40:FF:000040">
    <property type="entry name" value="tRNA N6-adenosine threonylcarbamoyltransferase"/>
    <property type="match status" value="1"/>
</dbReference>
<dbReference type="Gene3D" id="3.30.420.40">
    <property type="match status" value="2"/>
</dbReference>
<dbReference type="HAMAP" id="MF_01445">
    <property type="entry name" value="TsaD"/>
    <property type="match status" value="1"/>
</dbReference>
<dbReference type="InterPro" id="IPR043129">
    <property type="entry name" value="ATPase_NBD"/>
</dbReference>
<dbReference type="InterPro" id="IPR000905">
    <property type="entry name" value="Gcp-like_dom"/>
</dbReference>
<dbReference type="InterPro" id="IPR017861">
    <property type="entry name" value="KAE1/TsaD"/>
</dbReference>
<dbReference type="InterPro" id="IPR017860">
    <property type="entry name" value="Peptidase_M22_CS"/>
</dbReference>
<dbReference type="InterPro" id="IPR022450">
    <property type="entry name" value="TsaD"/>
</dbReference>
<dbReference type="NCBIfam" id="TIGR00329">
    <property type="entry name" value="gcp_kae1"/>
    <property type="match status" value="1"/>
</dbReference>
<dbReference type="NCBIfam" id="TIGR03723">
    <property type="entry name" value="T6A_TsaD_YgjD"/>
    <property type="match status" value="1"/>
</dbReference>
<dbReference type="PANTHER" id="PTHR11735">
    <property type="entry name" value="TRNA N6-ADENOSINE THREONYLCARBAMOYLTRANSFERASE"/>
    <property type="match status" value="1"/>
</dbReference>
<dbReference type="PANTHER" id="PTHR11735:SF6">
    <property type="entry name" value="TRNA N6-ADENOSINE THREONYLCARBAMOYLTRANSFERASE, MITOCHONDRIAL"/>
    <property type="match status" value="1"/>
</dbReference>
<dbReference type="Pfam" id="PF00814">
    <property type="entry name" value="TsaD"/>
    <property type="match status" value="1"/>
</dbReference>
<dbReference type="PRINTS" id="PR00789">
    <property type="entry name" value="OSIALOPTASE"/>
</dbReference>
<dbReference type="SUPFAM" id="SSF53067">
    <property type="entry name" value="Actin-like ATPase domain"/>
    <property type="match status" value="1"/>
</dbReference>
<dbReference type="PROSITE" id="PS01016">
    <property type="entry name" value="GLYCOPROTEASE"/>
    <property type="match status" value="1"/>
</dbReference>
<keyword id="KW-0012">Acyltransferase</keyword>
<keyword id="KW-0963">Cytoplasm</keyword>
<keyword id="KW-0408">Iron</keyword>
<keyword id="KW-0479">Metal-binding</keyword>
<keyword id="KW-1185">Reference proteome</keyword>
<keyword id="KW-0808">Transferase</keyword>
<keyword id="KW-0819">tRNA processing</keyword>
<organism>
    <name type="scientific">Nocardioides sp. (strain ATCC BAA-499 / JS614)</name>
    <dbReference type="NCBI Taxonomy" id="196162"/>
    <lineage>
        <taxon>Bacteria</taxon>
        <taxon>Bacillati</taxon>
        <taxon>Actinomycetota</taxon>
        <taxon>Actinomycetes</taxon>
        <taxon>Propionibacteriales</taxon>
        <taxon>Nocardioidaceae</taxon>
        <taxon>Nocardioides</taxon>
    </lineage>
</organism>
<proteinExistence type="inferred from homology"/>